<gene>
    <name type="primary">malG</name>
    <name type="ordered locus">VPA1399</name>
</gene>
<evidence type="ECO:0000250" key="1">
    <source>
        <dbReference type="UniProtKB" id="P68183"/>
    </source>
</evidence>
<evidence type="ECO:0000255" key="2"/>
<evidence type="ECO:0000255" key="3">
    <source>
        <dbReference type="PROSITE-ProRule" id="PRU00441"/>
    </source>
</evidence>
<evidence type="ECO:0000305" key="4"/>
<protein>
    <recommendedName>
        <fullName evidence="1">Maltose/maltodextrin transport system permease protein MalG</fullName>
    </recommendedName>
</protein>
<sequence length="296" mass="32098">MAMVQGKSLKYRVWATHIAMWAFLALIIFPLLMIIAISFREGNFATGSLIPDNPTLDHWKLALGFSITNADGTVTPPPFPVMTWLWNSVKVGGISAILIVALSTTSAYAFARMKFKGKNTILKAMMIFQMFPAVLALVALYALFDKLGQYIPFLGLNTHGGLIFAYLGGIALHVWTIKGYFESIDSSLEEAAALDGATPWQAFRLVLLPLSVPILAVVFILSFIMVIGEVPVASLLLSDVDSYTLAVGMQQYLYPQNYLWGDFAAAAVLSAVPITAVFLLAQRWLVGGLTAGGVKG</sequence>
<name>MALG_VIBPA</name>
<reference key="1">
    <citation type="journal article" date="2003" name="Lancet">
        <title>Genome sequence of Vibrio parahaemolyticus: a pathogenic mechanism distinct from that of V. cholerae.</title>
        <authorList>
            <person name="Makino K."/>
            <person name="Oshima K."/>
            <person name="Kurokawa K."/>
            <person name="Yokoyama K."/>
            <person name="Uda T."/>
            <person name="Tagomori K."/>
            <person name="Iijima Y."/>
            <person name="Najima M."/>
            <person name="Nakano M."/>
            <person name="Yamashita A."/>
            <person name="Kubota Y."/>
            <person name="Kimura S."/>
            <person name="Yasunaga T."/>
            <person name="Honda T."/>
            <person name="Shinagawa H."/>
            <person name="Hattori M."/>
            <person name="Iida T."/>
        </authorList>
    </citation>
    <scope>NUCLEOTIDE SEQUENCE [LARGE SCALE GENOMIC DNA]</scope>
    <source>
        <strain>RIMD 2210633</strain>
    </source>
</reference>
<comment type="function">
    <text evidence="1">Part of the ABC transporter complex MalEFGK involved in maltose/maltodextrin import. Probably responsible for the translocation of the substrate across the membrane.</text>
</comment>
<comment type="subunit">
    <text evidence="1">The complex is composed of two ATP-binding proteins (MalK), two transmembrane proteins (MalG and MalF) and a solute-binding protein (MalE).</text>
</comment>
<comment type="subcellular location">
    <subcellularLocation>
        <location evidence="1">Cell inner membrane</location>
        <topology evidence="1">Multi-pass membrane protein</topology>
    </subcellularLocation>
</comment>
<comment type="similarity">
    <text evidence="4">Belongs to the binding-protein-dependent transport system permease family. MalFG subfamily.</text>
</comment>
<keyword id="KW-0997">Cell inner membrane</keyword>
<keyword id="KW-1003">Cell membrane</keyword>
<keyword id="KW-0472">Membrane</keyword>
<keyword id="KW-0762">Sugar transport</keyword>
<keyword id="KW-0812">Transmembrane</keyword>
<keyword id="KW-1133">Transmembrane helix</keyword>
<keyword id="KW-0813">Transport</keyword>
<organism>
    <name type="scientific">Vibrio parahaemolyticus serotype O3:K6 (strain RIMD 2210633)</name>
    <dbReference type="NCBI Taxonomy" id="223926"/>
    <lineage>
        <taxon>Bacteria</taxon>
        <taxon>Pseudomonadati</taxon>
        <taxon>Pseudomonadota</taxon>
        <taxon>Gammaproteobacteria</taxon>
        <taxon>Vibrionales</taxon>
        <taxon>Vibrionaceae</taxon>
        <taxon>Vibrio</taxon>
    </lineage>
</organism>
<feature type="chain" id="PRO_0000060090" description="Maltose/maltodextrin transport system permease protein MalG">
    <location>
        <begin position="1"/>
        <end position="296"/>
    </location>
</feature>
<feature type="topological domain" description="Cytoplasmic" evidence="2">
    <location>
        <begin position="1"/>
        <end position="12"/>
    </location>
</feature>
<feature type="transmembrane region" description="Helical" evidence="3">
    <location>
        <begin position="13"/>
        <end position="35"/>
    </location>
</feature>
<feature type="topological domain" description="Periplasmic" evidence="2">
    <location>
        <begin position="36"/>
        <end position="88"/>
    </location>
</feature>
<feature type="transmembrane region" description="Helical" evidence="3">
    <location>
        <begin position="89"/>
        <end position="111"/>
    </location>
</feature>
<feature type="topological domain" description="Cytoplasmic" evidence="2">
    <location>
        <begin position="112"/>
        <end position="123"/>
    </location>
</feature>
<feature type="transmembrane region" description="Helical" evidence="3">
    <location>
        <begin position="124"/>
        <end position="143"/>
    </location>
</feature>
<feature type="topological domain" description="Periplasmic" evidence="2">
    <location>
        <begin position="144"/>
        <end position="152"/>
    </location>
</feature>
<feature type="transmembrane region" description="Helical" evidence="3">
    <location>
        <begin position="153"/>
        <end position="175"/>
    </location>
</feature>
<feature type="topological domain" description="Cytoplasmic" evidence="2">
    <location>
        <begin position="176"/>
        <end position="204"/>
    </location>
</feature>
<feature type="transmembrane region" description="Helical" evidence="3">
    <location>
        <begin position="205"/>
        <end position="227"/>
    </location>
</feature>
<feature type="topological domain" description="Periplasmic" evidence="2">
    <location>
        <begin position="228"/>
        <end position="257"/>
    </location>
</feature>
<feature type="transmembrane region" description="Helical" evidence="3">
    <location>
        <begin position="258"/>
        <end position="280"/>
    </location>
</feature>
<feature type="topological domain" description="Cytoplasmic" evidence="2">
    <location>
        <begin position="281"/>
        <end position="296"/>
    </location>
</feature>
<feature type="domain" description="ABC transmembrane type-1" evidence="3">
    <location>
        <begin position="85"/>
        <end position="281"/>
    </location>
</feature>
<proteinExistence type="inferred from homology"/>
<dbReference type="EMBL" id="BA000032">
    <property type="protein sequence ID" value="BAC62742.1"/>
    <property type="molecule type" value="Genomic_DNA"/>
</dbReference>
<dbReference type="RefSeq" id="NP_800909.1">
    <property type="nucleotide sequence ID" value="NC_004605.1"/>
</dbReference>
<dbReference type="RefSeq" id="WP_005463109.1">
    <property type="nucleotide sequence ID" value="NC_004605.1"/>
</dbReference>
<dbReference type="SMR" id="Q87GB8"/>
<dbReference type="GeneID" id="1192095"/>
<dbReference type="KEGG" id="vpa:VPA1399"/>
<dbReference type="PATRIC" id="fig|223926.6.peg.4324"/>
<dbReference type="eggNOG" id="COG3833">
    <property type="taxonomic scope" value="Bacteria"/>
</dbReference>
<dbReference type="HOGENOM" id="CLU_016047_1_2_6"/>
<dbReference type="Proteomes" id="UP000002493">
    <property type="component" value="Chromosome 2"/>
</dbReference>
<dbReference type="GO" id="GO:0005886">
    <property type="term" value="C:plasma membrane"/>
    <property type="evidence" value="ECO:0007669"/>
    <property type="project" value="UniProtKB-SubCell"/>
</dbReference>
<dbReference type="GO" id="GO:0015423">
    <property type="term" value="F:ABC-type maltose transporter activity"/>
    <property type="evidence" value="ECO:0007669"/>
    <property type="project" value="TreeGrafter"/>
</dbReference>
<dbReference type="GO" id="GO:0042956">
    <property type="term" value="P:maltodextrin transmembrane transport"/>
    <property type="evidence" value="ECO:0007669"/>
    <property type="project" value="TreeGrafter"/>
</dbReference>
<dbReference type="CDD" id="cd06261">
    <property type="entry name" value="TM_PBP2"/>
    <property type="match status" value="1"/>
</dbReference>
<dbReference type="FunFam" id="1.10.3720.10:FF:000010">
    <property type="entry name" value="Maltose ABC transporter permease MalG"/>
    <property type="match status" value="1"/>
</dbReference>
<dbReference type="Gene3D" id="1.10.3720.10">
    <property type="entry name" value="MetI-like"/>
    <property type="match status" value="1"/>
</dbReference>
<dbReference type="InterPro" id="IPR050901">
    <property type="entry name" value="BP-dep_ABC_trans_perm"/>
</dbReference>
<dbReference type="InterPro" id="IPR000515">
    <property type="entry name" value="MetI-like"/>
</dbReference>
<dbReference type="InterPro" id="IPR035906">
    <property type="entry name" value="MetI-like_sf"/>
</dbReference>
<dbReference type="NCBIfam" id="NF008231">
    <property type="entry name" value="PRK10998.1"/>
    <property type="match status" value="1"/>
</dbReference>
<dbReference type="PANTHER" id="PTHR32243">
    <property type="entry name" value="MALTOSE TRANSPORT SYSTEM PERMEASE-RELATED"/>
    <property type="match status" value="1"/>
</dbReference>
<dbReference type="PANTHER" id="PTHR32243:SF50">
    <property type="entry name" value="MALTOSE_MALTODEXTRIN TRANSPORT SYSTEM PERMEASE PROTEIN MALG"/>
    <property type="match status" value="1"/>
</dbReference>
<dbReference type="Pfam" id="PF00528">
    <property type="entry name" value="BPD_transp_1"/>
    <property type="match status" value="1"/>
</dbReference>
<dbReference type="SUPFAM" id="SSF161098">
    <property type="entry name" value="MetI-like"/>
    <property type="match status" value="1"/>
</dbReference>
<dbReference type="PROSITE" id="PS50928">
    <property type="entry name" value="ABC_TM1"/>
    <property type="match status" value="1"/>
</dbReference>
<accession>Q87GB8</accession>